<accession>A4J683</accession>
<protein>
    <recommendedName>
        <fullName evidence="1">Ribonuclease 3</fullName>
        <ecNumber evidence="1">3.1.26.3</ecNumber>
    </recommendedName>
    <alternativeName>
        <fullName evidence="1">Ribonuclease III</fullName>
        <shortName evidence="1">RNase III</shortName>
    </alternativeName>
</protein>
<name>RNC_DESRM</name>
<comment type="function">
    <text evidence="1">Digests double-stranded RNA. Involved in the processing of primary rRNA transcript to yield the immediate precursors to the large and small rRNAs (23S and 16S). Processes some mRNAs, and tRNAs when they are encoded in the rRNA operon. Processes pre-crRNA and tracrRNA of type II CRISPR loci if present in the organism.</text>
</comment>
<comment type="catalytic activity">
    <reaction evidence="1">
        <text>Endonucleolytic cleavage to 5'-phosphomonoester.</text>
        <dbReference type="EC" id="3.1.26.3"/>
    </reaction>
</comment>
<comment type="cofactor">
    <cofactor evidence="1">
        <name>Mg(2+)</name>
        <dbReference type="ChEBI" id="CHEBI:18420"/>
    </cofactor>
</comment>
<comment type="subunit">
    <text evidence="1">Homodimer.</text>
</comment>
<comment type="subcellular location">
    <subcellularLocation>
        <location evidence="1">Cytoplasm</location>
    </subcellularLocation>
</comment>
<comment type="similarity">
    <text evidence="1">Belongs to the ribonuclease III family.</text>
</comment>
<organism>
    <name type="scientific">Desulforamulus reducens (strain ATCC BAA-1160 / DSM 100696 / MI-1)</name>
    <name type="common">Desulfotomaculum reducens</name>
    <dbReference type="NCBI Taxonomy" id="349161"/>
    <lineage>
        <taxon>Bacteria</taxon>
        <taxon>Bacillati</taxon>
        <taxon>Bacillota</taxon>
        <taxon>Clostridia</taxon>
        <taxon>Eubacteriales</taxon>
        <taxon>Peptococcaceae</taxon>
        <taxon>Desulforamulus</taxon>
    </lineage>
</organism>
<keyword id="KW-0963">Cytoplasm</keyword>
<keyword id="KW-0255">Endonuclease</keyword>
<keyword id="KW-0378">Hydrolase</keyword>
<keyword id="KW-0460">Magnesium</keyword>
<keyword id="KW-0479">Metal-binding</keyword>
<keyword id="KW-0507">mRNA processing</keyword>
<keyword id="KW-0540">Nuclease</keyword>
<keyword id="KW-1185">Reference proteome</keyword>
<keyword id="KW-0694">RNA-binding</keyword>
<keyword id="KW-0698">rRNA processing</keyword>
<keyword id="KW-0699">rRNA-binding</keyword>
<keyword id="KW-0819">tRNA processing</keyword>
<evidence type="ECO:0000255" key="1">
    <source>
        <dbReference type="HAMAP-Rule" id="MF_00104"/>
    </source>
</evidence>
<evidence type="ECO:0000256" key="2">
    <source>
        <dbReference type="SAM" id="MobiDB-lite"/>
    </source>
</evidence>
<feature type="chain" id="PRO_1000075743" description="Ribonuclease 3">
    <location>
        <begin position="1"/>
        <end position="246"/>
    </location>
</feature>
<feature type="domain" description="RNase III" evidence="1">
    <location>
        <begin position="8"/>
        <end position="137"/>
    </location>
</feature>
<feature type="domain" description="DRBM" evidence="1">
    <location>
        <begin position="164"/>
        <end position="233"/>
    </location>
</feature>
<feature type="region of interest" description="Disordered" evidence="2">
    <location>
        <begin position="212"/>
        <end position="246"/>
    </location>
</feature>
<feature type="active site" evidence="1">
    <location>
        <position position="54"/>
    </location>
</feature>
<feature type="active site" evidence="1">
    <location>
        <position position="126"/>
    </location>
</feature>
<feature type="binding site" evidence="1">
    <location>
        <position position="50"/>
    </location>
    <ligand>
        <name>Mg(2+)</name>
        <dbReference type="ChEBI" id="CHEBI:18420"/>
    </ligand>
</feature>
<feature type="binding site" evidence="1">
    <location>
        <position position="123"/>
    </location>
    <ligand>
        <name>Mg(2+)</name>
        <dbReference type="ChEBI" id="CHEBI:18420"/>
    </ligand>
</feature>
<feature type="binding site" evidence="1">
    <location>
        <position position="126"/>
    </location>
    <ligand>
        <name>Mg(2+)</name>
        <dbReference type="ChEBI" id="CHEBI:18420"/>
    </ligand>
</feature>
<sequence>MSKQDEQANRLKTRLGFKWHNPTLLIQALTHSSCVHENRGHGLCHNQRLEFLGDAVLELIISEHLYKMFPDRTEGELTKMRASSVCEPSLAKVARGLDLGRCLRMGRGEERSGGRERPSILADAFEALLGAIYLDQGLEISRHFVLNCLSSIIDDVVAGRLDRDYKTELQEILQQSSPDPLTYTIMDESGPDHDKTFTAGVIYKGKVIGKGSGHSKKEAEQQAAKDAFQHLEGMGKSGHKSAGPIR</sequence>
<proteinExistence type="inferred from homology"/>
<dbReference type="EC" id="3.1.26.3" evidence="1"/>
<dbReference type="EMBL" id="CP000612">
    <property type="protein sequence ID" value="ABO50586.1"/>
    <property type="molecule type" value="Genomic_DNA"/>
</dbReference>
<dbReference type="RefSeq" id="WP_011878392.1">
    <property type="nucleotide sequence ID" value="NC_009253.1"/>
</dbReference>
<dbReference type="SMR" id="A4J683"/>
<dbReference type="STRING" id="349161.Dred_2069"/>
<dbReference type="KEGG" id="drm:Dred_2069"/>
<dbReference type="eggNOG" id="COG0571">
    <property type="taxonomic scope" value="Bacteria"/>
</dbReference>
<dbReference type="HOGENOM" id="CLU_000907_1_3_9"/>
<dbReference type="OrthoDB" id="9805026at2"/>
<dbReference type="Proteomes" id="UP000001556">
    <property type="component" value="Chromosome"/>
</dbReference>
<dbReference type="GO" id="GO:0005737">
    <property type="term" value="C:cytoplasm"/>
    <property type="evidence" value="ECO:0007669"/>
    <property type="project" value="UniProtKB-SubCell"/>
</dbReference>
<dbReference type="GO" id="GO:0003725">
    <property type="term" value="F:double-stranded RNA binding"/>
    <property type="evidence" value="ECO:0007669"/>
    <property type="project" value="TreeGrafter"/>
</dbReference>
<dbReference type="GO" id="GO:0046872">
    <property type="term" value="F:metal ion binding"/>
    <property type="evidence" value="ECO:0007669"/>
    <property type="project" value="UniProtKB-KW"/>
</dbReference>
<dbReference type="GO" id="GO:0004525">
    <property type="term" value="F:ribonuclease III activity"/>
    <property type="evidence" value="ECO:0007669"/>
    <property type="project" value="UniProtKB-UniRule"/>
</dbReference>
<dbReference type="GO" id="GO:0019843">
    <property type="term" value="F:rRNA binding"/>
    <property type="evidence" value="ECO:0007669"/>
    <property type="project" value="UniProtKB-KW"/>
</dbReference>
<dbReference type="GO" id="GO:0006397">
    <property type="term" value="P:mRNA processing"/>
    <property type="evidence" value="ECO:0007669"/>
    <property type="project" value="UniProtKB-UniRule"/>
</dbReference>
<dbReference type="GO" id="GO:0010468">
    <property type="term" value="P:regulation of gene expression"/>
    <property type="evidence" value="ECO:0007669"/>
    <property type="project" value="TreeGrafter"/>
</dbReference>
<dbReference type="GO" id="GO:0006364">
    <property type="term" value="P:rRNA processing"/>
    <property type="evidence" value="ECO:0007669"/>
    <property type="project" value="UniProtKB-UniRule"/>
</dbReference>
<dbReference type="GO" id="GO:0008033">
    <property type="term" value="P:tRNA processing"/>
    <property type="evidence" value="ECO:0007669"/>
    <property type="project" value="UniProtKB-KW"/>
</dbReference>
<dbReference type="CDD" id="cd10845">
    <property type="entry name" value="DSRM_RNAse_III_family"/>
    <property type="match status" value="1"/>
</dbReference>
<dbReference type="CDD" id="cd00593">
    <property type="entry name" value="RIBOc"/>
    <property type="match status" value="1"/>
</dbReference>
<dbReference type="FunFam" id="1.10.1520.10:FF:000001">
    <property type="entry name" value="Ribonuclease 3"/>
    <property type="match status" value="1"/>
</dbReference>
<dbReference type="FunFam" id="3.30.160.20:FF:000003">
    <property type="entry name" value="Ribonuclease 3"/>
    <property type="match status" value="1"/>
</dbReference>
<dbReference type="Gene3D" id="3.30.160.20">
    <property type="match status" value="1"/>
</dbReference>
<dbReference type="Gene3D" id="1.10.1520.10">
    <property type="entry name" value="Ribonuclease III domain"/>
    <property type="match status" value="1"/>
</dbReference>
<dbReference type="HAMAP" id="MF_00104">
    <property type="entry name" value="RNase_III"/>
    <property type="match status" value="1"/>
</dbReference>
<dbReference type="InterPro" id="IPR014720">
    <property type="entry name" value="dsRBD_dom"/>
</dbReference>
<dbReference type="InterPro" id="IPR011907">
    <property type="entry name" value="RNase_III"/>
</dbReference>
<dbReference type="InterPro" id="IPR000999">
    <property type="entry name" value="RNase_III_dom"/>
</dbReference>
<dbReference type="InterPro" id="IPR036389">
    <property type="entry name" value="RNase_III_sf"/>
</dbReference>
<dbReference type="NCBIfam" id="TIGR02191">
    <property type="entry name" value="RNaseIII"/>
    <property type="match status" value="1"/>
</dbReference>
<dbReference type="PANTHER" id="PTHR11207:SF0">
    <property type="entry name" value="RIBONUCLEASE 3"/>
    <property type="match status" value="1"/>
</dbReference>
<dbReference type="PANTHER" id="PTHR11207">
    <property type="entry name" value="RIBONUCLEASE III"/>
    <property type="match status" value="1"/>
</dbReference>
<dbReference type="Pfam" id="PF00035">
    <property type="entry name" value="dsrm"/>
    <property type="match status" value="1"/>
</dbReference>
<dbReference type="Pfam" id="PF14622">
    <property type="entry name" value="Ribonucleas_3_3"/>
    <property type="match status" value="1"/>
</dbReference>
<dbReference type="SMART" id="SM00358">
    <property type="entry name" value="DSRM"/>
    <property type="match status" value="1"/>
</dbReference>
<dbReference type="SMART" id="SM00535">
    <property type="entry name" value="RIBOc"/>
    <property type="match status" value="1"/>
</dbReference>
<dbReference type="SUPFAM" id="SSF54768">
    <property type="entry name" value="dsRNA-binding domain-like"/>
    <property type="match status" value="1"/>
</dbReference>
<dbReference type="SUPFAM" id="SSF69065">
    <property type="entry name" value="RNase III domain-like"/>
    <property type="match status" value="1"/>
</dbReference>
<dbReference type="PROSITE" id="PS50137">
    <property type="entry name" value="DS_RBD"/>
    <property type="match status" value="1"/>
</dbReference>
<dbReference type="PROSITE" id="PS00517">
    <property type="entry name" value="RNASE_3_1"/>
    <property type="match status" value="1"/>
</dbReference>
<dbReference type="PROSITE" id="PS50142">
    <property type="entry name" value="RNASE_3_2"/>
    <property type="match status" value="1"/>
</dbReference>
<gene>
    <name evidence="1" type="primary">rnc</name>
    <name type="ordered locus">Dred_2069</name>
</gene>
<reference key="1">
    <citation type="submission" date="2007-03" db="EMBL/GenBank/DDBJ databases">
        <title>Complete sequence of Desulfotomaculum reducens MI-1.</title>
        <authorList>
            <consortium name="US DOE Joint Genome Institute"/>
            <person name="Copeland A."/>
            <person name="Lucas S."/>
            <person name="Lapidus A."/>
            <person name="Barry K."/>
            <person name="Detter J.C."/>
            <person name="Glavina del Rio T."/>
            <person name="Hammon N."/>
            <person name="Israni S."/>
            <person name="Dalin E."/>
            <person name="Tice H."/>
            <person name="Pitluck S."/>
            <person name="Sims D."/>
            <person name="Brettin T."/>
            <person name="Bruce D."/>
            <person name="Han C."/>
            <person name="Tapia R."/>
            <person name="Schmutz J."/>
            <person name="Larimer F."/>
            <person name="Land M."/>
            <person name="Hauser L."/>
            <person name="Kyrpides N."/>
            <person name="Kim E."/>
            <person name="Tebo B.M."/>
            <person name="Richardson P."/>
        </authorList>
    </citation>
    <scope>NUCLEOTIDE SEQUENCE [LARGE SCALE GENOMIC DNA]</scope>
    <source>
        <strain>ATCC BAA-1160 / DSM 100696 / MI-1</strain>
    </source>
</reference>